<reference key="1">
    <citation type="journal article" date="2008" name="J. Bacteriol.">
        <title>Complete genome sequence of uropathogenic Proteus mirabilis, a master of both adherence and motility.</title>
        <authorList>
            <person name="Pearson M.M."/>
            <person name="Sebaihia M."/>
            <person name="Churcher C."/>
            <person name="Quail M.A."/>
            <person name="Seshasayee A.S."/>
            <person name="Luscombe N.M."/>
            <person name="Abdellah Z."/>
            <person name="Arrosmith C."/>
            <person name="Atkin B."/>
            <person name="Chillingworth T."/>
            <person name="Hauser H."/>
            <person name="Jagels K."/>
            <person name="Moule S."/>
            <person name="Mungall K."/>
            <person name="Norbertczak H."/>
            <person name="Rabbinowitsch E."/>
            <person name="Walker D."/>
            <person name="Whithead S."/>
            <person name="Thomson N.R."/>
            <person name="Rather P.N."/>
            <person name="Parkhill J."/>
            <person name="Mobley H.L.T."/>
        </authorList>
    </citation>
    <scope>NUCLEOTIDE SEQUENCE [LARGE SCALE GENOMIC DNA]</scope>
    <source>
        <strain>HI4320</strain>
    </source>
</reference>
<comment type="similarity">
    <text evidence="1">Belongs to the universal ribosomal protein uS2 family.</text>
</comment>
<organism>
    <name type="scientific">Proteus mirabilis (strain HI4320)</name>
    <dbReference type="NCBI Taxonomy" id="529507"/>
    <lineage>
        <taxon>Bacteria</taxon>
        <taxon>Pseudomonadati</taxon>
        <taxon>Pseudomonadota</taxon>
        <taxon>Gammaproteobacteria</taxon>
        <taxon>Enterobacterales</taxon>
        <taxon>Morganellaceae</taxon>
        <taxon>Proteus</taxon>
    </lineage>
</organism>
<accession>B4F2D3</accession>
<name>RS2_PROMH</name>
<gene>
    <name evidence="1" type="primary">rpsB</name>
    <name type="ordered locus">PMI2285</name>
</gene>
<keyword id="KW-1185">Reference proteome</keyword>
<keyword id="KW-0687">Ribonucleoprotein</keyword>
<keyword id="KW-0689">Ribosomal protein</keyword>
<protein>
    <recommendedName>
        <fullName evidence="1">Small ribosomal subunit protein uS2</fullName>
    </recommendedName>
    <alternativeName>
        <fullName evidence="2">30S ribosomal protein S2</fullName>
    </alternativeName>
</protein>
<sequence length="241" mass="26795">MATVSMRDMLQAGVHFGHQTRYWNPKMKPFIFGARNKVHIINLEKTVPMFNEALVELNKIASRKGKILFVGTKRSAVEAVKEAAESCDQFYVNHRWLGGMLTNWKTVRQSIKRLKDLESQSQDGTFDKLTKKEALMRSRELGKLENSLGGIKDMGGLPDALFVIDAEHEHIAIKEANNLGIPVFAIVDTNSDPDGIDYIIPGNDDAIRAVKLYLTAAATAVREGRSQDLAVQAEEGLVEAE</sequence>
<evidence type="ECO:0000255" key="1">
    <source>
        <dbReference type="HAMAP-Rule" id="MF_00291"/>
    </source>
</evidence>
<evidence type="ECO:0000305" key="2"/>
<proteinExistence type="inferred from homology"/>
<feature type="chain" id="PRO_1000115043" description="Small ribosomal subunit protein uS2">
    <location>
        <begin position="1"/>
        <end position="241"/>
    </location>
</feature>
<dbReference type="EMBL" id="AM942759">
    <property type="protein sequence ID" value="CAR44518.1"/>
    <property type="molecule type" value="Genomic_DNA"/>
</dbReference>
<dbReference type="RefSeq" id="WP_004245475.1">
    <property type="nucleotide sequence ID" value="NC_010554.1"/>
</dbReference>
<dbReference type="SMR" id="B4F2D3"/>
<dbReference type="EnsemblBacteria" id="CAR44518">
    <property type="protein sequence ID" value="CAR44518"/>
    <property type="gene ID" value="PMI2285"/>
</dbReference>
<dbReference type="GeneID" id="6800573"/>
<dbReference type="KEGG" id="pmr:PMI2285"/>
<dbReference type="eggNOG" id="COG0052">
    <property type="taxonomic scope" value="Bacteria"/>
</dbReference>
<dbReference type="HOGENOM" id="CLU_040318_1_2_6"/>
<dbReference type="Proteomes" id="UP000008319">
    <property type="component" value="Chromosome"/>
</dbReference>
<dbReference type="GO" id="GO:0022627">
    <property type="term" value="C:cytosolic small ribosomal subunit"/>
    <property type="evidence" value="ECO:0007669"/>
    <property type="project" value="TreeGrafter"/>
</dbReference>
<dbReference type="GO" id="GO:0003735">
    <property type="term" value="F:structural constituent of ribosome"/>
    <property type="evidence" value="ECO:0007669"/>
    <property type="project" value="InterPro"/>
</dbReference>
<dbReference type="GO" id="GO:0006412">
    <property type="term" value="P:translation"/>
    <property type="evidence" value="ECO:0007669"/>
    <property type="project" value="UniProtKB-UniRule"/>
</dbReference>
<dbReference type="CDD" id="cd01425">
    <property type="entry name" value="RPS2"/>
    <property type="match status" value="1"/>
</dbReference>
<dbReference type="FunFam" id="1.10.287.610:FF:000001">
    <property type="entry name" value="30S ribosomal protein S2"/>
    <property type="match status" value="1"/>
</dbReference>
<dbReference type="Gene3D" id="3.40.50.10490">
    <property type="entry name" value="Glucose-6-phosphate isomerase like protein, domain 1"/>
    <property type="match status" value="1"/>
</dbReference>
<dbReference type="Gene3D" id="1.10.287.610">
    <property type="entry name" value="Helix hairpin bin"/>
    <property type="match status" value="1"/>
</dbReference>
<dbReference type="HAMAP" id="MF_00291_B">
    <property type="entry name" value="Ribosomal_uS2_B"/>
    <property type="match status" value="1"/>
</dbReference>
<dbReference type="InterPro" id="IPR001865">
    <property type="entry name" value="Ribosomal_uS2"/>
</dbReference>
<dbReference type="InterPro" id="IPR005706">
    <property type="entry name" value="Ribosomal_uS2_bac/mit/plastid"/>
</dbReference>
<dbReference type="InterPro" id="IPR018130">
    <property type="entry name" value="Ribosomal_uS2_CS"/>
</dbReference>
<dbReference type="InterPro" id="IPR023591">
    <property type="entry name" value="Ribosomal_uS2_flav_dom_sf"/>
</dbReference>
<dbReference type="NCBIfam" id="TIGR01011">
    <property type="entry name" value="rpsB_bact"/>
    <property type="match status" value="1"/>
</dbReference>
<dbReference type="PANTHER" id="PTHR12534">
    <property type="entry name" value="30S RIBOSOMAL PROTEIN S2 PROKARYOTIC AND ORGANELLAR"/>
    <property type="match status" value="1"/>
</dbReference>
<dbReference type="PANTHER" id="PTHR12534:SF0">
    <property type="entry name" value="SMALL RIBOSOMAL SUBUNIT PROTEIN US2M"/>
    <property type="match status" value="1"/>
</dbReference>
<dbReference type="Pfam" id="PF00318">
    <property type="entry name" value="Ribosomal_S2"/>
    <property type="match status" value="1"/>
</dbReference>
<dbReference type="PRINTS" id="PR00395">
    <property type="entry name" value="RIBOSOMALS2"/>
</dbReference>
<dbReference type="SUPFAM" id="SSF52313">
    <property type="entry name" value="Ribosomal protein S2"/>
    <property type="match status" value="1"/>
</dbReference>
<dbReference type="PROSITE" id="PS00962">
    <property type="entry name" value="RIBOSOMAL_S2_1"/>
    <property type="match status" value="1"/>
</dbReference>
<dbReference type="PROSITE" id="PS00963">
    <property type="entry name" value="RIBOSOMAL_S2_2"/>
    <property type="match status" value="1"/>
</dbReference>